<comment type="function">
    <text evidence="1">O-methyltransferase that catalyzes the 2 O-methylation steps in the ubiquinone biosynthetic pathway.</text>
</comment>
<comment type="catalytic activity">
    <reaction evidence="1">
        <text>a 3-demethylubiquinol + S-adenosyl-L-methionine = a ubiquinol + S-adenosyl-L-homocysteine + H(+)</text>
        <dbReference type="Rhea" id="RHEA:44380"/>
        <dbReference type="Rhea" id="RHEA-COMP:9566"/>
        <dbReference type="Rhea" id="RHEA-COMP:10914"/>
        <dbReference type="ChEBI" id="CHEBI:15378"/>
        <dbReference type="ChEBI" id="CHEBI:17976"/>
        <dbReference type="ChEBI" id="CHEBI:57856"/>
        <dbReference type="ChEBI" id="CHEBI:59789"/>
        <dbReference type="ChEBI" id="CHEBI:84422"/>
        <dbReference type="EC" id="2.1.1.64"/>
    </reaction>
</comment>
<comment type="catalytic activity">
    <reaction evidence="1">
        <text>a 3-(all-trans-polyprenyl)benzene-1,2-diol + S-adenosyl-L-methionine = a 2-methoxy-6-(all-trans-polyprenyl)phenol + S-adenosyl-L-homocysteine + H(+)</text>
        <dbReference type="Rhea" id="RHEA:31411"/>
        <dbReference type="Rhea" id="RHEA-COMP:9550"/>
        <dbReference type="Rhea" id="RHEA-COMP:9551"/>
        <dbReference type="ChEBI" id="CHEBI:15378"/>
        <dbReference type="ChEBI" id="CHEBI:57856"/>
        <dbReference type="ChEBI" id="CHEBI:59789"/>
        <dbReference type="ChEBI" id="CHEBI:62729"/>
        <dbReference type="ChEBI" id="CHEBI:62731"/>
        <dbReference type="EC" id="2.1.1.222"/>
    </reaction>
</comment>
<comment type="pathway">
    <text evidence="1">Cofactor biosynthesis; ubiquinone biosynthesis.</text>
</comment>
<comment type="similarity">
    <text evidence="1">Belongs to the methyltransferase superfamily. UbiG/COQ3 family.</text>
</comment>
<organism>
    <name type="scientific">Yersinia enterocolitica serotype O:8 / biotype 1B (strain NCTC 13174 / 8081)</name>
    <dbReference type="NCBI Taxonomy" id="393305"/>
    <lineage>
        <taxon>Bacteria</taxon>
        <taxon>Pseudomonadati</taxon>
        <taxon>Pseudomonadota</taxon>
        <taxon>Gammaproteobacteria</taxon>
        <taxon>Enterobacterales</taxon>
        <taxon>Yersiniaceae</taxon>
        <taxon>Yersinia</taxon>
    </lineage>
</organism>
<feature type="chain" id="PRO_1000013932" description="Ubiquinone biosynthesis O-methyltransferase">
    <location>
        <begin position="1"/>
        <end position="242"/>
    </location>
</feature>
<feature type="binding site" evidence="1">
    <location>
        <position position="44"/>
    </location>
    <ligand>
        <name>S-adenosyl-L-methionine</name>
        <dbReference type="ChEBI" id="CHEBI:59789"/>
    </ligand>
</feature>
<feature type="binding site" evidence="1">
    <location>
        <position position="64"/>
    </location>
    <ligand>
        <name>S-adenosyl-L-methionine</name>
        <dbReference type="ChEBI" id="CHEBI:59789"/>
    </ligand>
</feature>
<feature type="binding site" evidence="1">
    <location>
        <position position="85"/>
    </location>
    <ligand>
        <name>S-adenosyl-L-methionine</name>
        <dbReference type="ChEBI" id="CHEBI:59789"/>
    </ligand>
</feature>
<feature type="binding site" evidence="1">
    <location>
        <position position="129"/>
    </location>
    <ligand>
        <name>S-adenosyl-L-methionine</name>
        <dbReference type="ChEBI" id="CHEBI:59789"/>
    </ligand>
</feature>
<reference key="1">
    <citation type="journal article" date="2006" name="PLoS Genet.">
        <title>The complete genome sequence and comparative genome analysis of the high pathogenicity Yersinia enterocolitica strain 8081.</title>
        <authorList>
            <person name="Thomson N.R."/>
            <person name="Howard S."/>
            <person name="Wren B.W."/>
            <person name="Holden M.T.G."/>
            <person name="Crossman L."/>
            <person name="Challis G.L."/>
            <person name="Churcher C."/>
            <person name="Mungall K."/>
            <person name="Brooks K."/>
            <person name="Chillingworth T."/>
            <person name="Feltwell T."/>
            <person name="Abdellah Z."/>
            <person name="Hauser H."/>
            <person name="Jagels K."/>
            <person name="Maddison M."/>
            <person name="Moule S."/>
            <person name="Sanders M."/>
            <person name="Whitehead S."/>
            <person name="Quail M.A."/>
            <person name="Dougan G."/>
            <person name="Parkhill J."/>
            <person name="Prentice M.B."/>
        </authorList>
    </citation>
    <scope>NUCLEOTIDE SEQUENCE [LARGE SCALE GENOMIC DNA]</scope>
    <source>
        <strain>NCTC 13174 / 8081</strain>
    </source>
</reference>
<gene>
    <name evidence="1" type="primary">ubiG</name>
    <name type="ordered locus">YE1394</name>
</gene>
<accession>A1JLA0</accession>
<proteinExistence type="inferred from homology"/>
<protein>
    <recommendedName>
        <fullName evidence="1">Ubiquinone biosynthesis O-methyltransferase</fullName>
    </recommendedName>
    <alternativeName>
        <fullName evidence="1">2-polyprenyl-6-hydroxyphenol methylase</fullName>
        <ecNumber evidence="1">2.1.1.222</ecNumber>
    </alternativeName>
    <alternativeName>
        <fullName evidence="1">3-demethylubiquinone 3-O-methyltransferase</fullName>
        <ecNumber evidence="1">2.1.1.64</ecNumber>
    </alternativeName>
</protein>
<name>UBIG_YERE8</name>
<keyword id="KW-0489">Methyltransferase</keyword>
<keyword id="KW-0949">S-adenosyl-L-methionine</keyword>
<keyword id="KW-0808">Transferase</keyword>
<keyword id="KW-0831">Ubiquinone biosynthesis</keyword>
<sequence length="242" mass="27459">MRVDNTASHQNVDEQEIAKFEAVASRWWDLEGEFKPLHRINPLRLDYILQRSGGIFDKKVLDVGCGGGILAESMAREGAQVTGLDMGYEPLQVARLHALETGTKLDYVQETVESHAQKHPQYYDVVTCMEMLEHVPDPASVIRACAQLVKPDGHVFFSTINRNTKSWLMAVVGAEYVLKMVPKGTHDAKKFIRPSELIGWVDQTPLRERHIIGLHYNPITDHFKLGRNVDVNYMVHTQRDEA</sequence>
<dbReference type="EC" id="2.1.1.222" evidence="1"/>
<dbReference type="EC" id="2.1.1.64" evidence="1"/>
<dbReference type="EMBL" id="AM286415">
    <property type="protein sequence ID" value="CAL11486.1"/>
    <property type="molecule type" value="Genomic_DNA"/>
</dbReference>
<dbReference type="RefSeq" id="WP_011815973.1">
    <property type="nucleotide sequence ID" value="NC_008800.1"/>
</dbReference>
<dbReference type="RefSeq" id="YP_001005707.1">
    <property type="nucleotide sequence ID" value="NC_008800.1"/>
</dbReference>
<dbReference type="SMR" id="A1JLA0"/>
<dbReference type="KEGG" id="yen:YE1394"/>
<dbReference type="PATRIC" id="fig|393305.7.peg.1515"/>
<dbReference type="eggNOG" id="COG2227">
    <property type="taxonomic scope" value="Bacteria"/>
</dbReference>
<dbReference type="HOGENOM" id="CLU_042432_5_0_6"/>
<dbReference type="OrthoDB" id="9801538at2"/>
<dbReference type="UniPathway" id="UPA00232"/>
<dbReference type="Proteomes" id="UP000000642">
    <property type="component" value="Chromosome"/>
</dbReference>
<dbReference type="GO" id="GO:0102208">
    <property type="term" value="F:2-polyprenyl-6-hydroxyphenol methylase activity"/>
    <property type="evidence" value="ECO:0007669"/>
    <property type="project" value="UniProtKB-EC"/>
</dbReference>
<dbReference type="GO" id="GO:0061542">
    <property type="term" value="F:3-demethylubiquinol 3-O-methyltransferase activity"/>
    <property type="evidence" value="ECO:0007669"/>
    <property type="project" value="UniProtKB-UniRule"/>
</dbReference>
<dbReference type="GO" id="GO:0010420">
    <property type="term" value="F:polyprenyldihydroxybenzoate methyltransferase activity"/>
    <property type="evidence" value="ECO:0007669"/>
    <property type="project" value="InterPro"/>
</dbReference>
<dbReference type="GO" id="GO:0032259">
    <property type="term" value="P:methylation"/>
    <property type="evidence" value="ECO:0007669"/>
    <property type="project" value="UniProtKB-KW"/>
</dbReference>
<dbReference type="CDD" id="cd02440">
    <property type="entry name" value="AdoMet_MTases"/>
    <property type="match status" value="1"/>
</dbReference>
<dbReference type="FunFam" id="3.40.50.150:FF:000028">
    <property type="entry name" value="Ubiquinone biosynthesis O-methyltransferase"/>
    <property type="match status" value="1"/>
</dbReference>
<dbReference type="Gene3D" id="3.40.50.150">
    <property type="entry name" value="Vaccinia Virus protein VP39"/>
    <property type="match status" value="1"/>
</dbReference>
<dbReference type="HAMAP" id="MF_00472">
    <property type="entry name" value="UbiG"/>
    <property type="match status" value="1"/>
</dbReference>
<dbReference type="InterPro" id="IPR029063">
    <property type="entry name" value="SAM-dependent_MTases_sf"/>
</dbReference>
<dbReference type="InterPro" id="IPR010233">
    <property type="entry name" value="UbiG_MeTrfase"/>
</dbReference>
<dbReference type="NCBIfam" id="TIGR01983">
    <property type="entry name" value="UbiG"/>
    <property type="match status" value="1"/>
</dbReference>
<dbReference type="PANTHER" id="PTHR43464">
    <property type="entry name" value="METHYLTRANSFERASE"/>
    <property type="match status" value="1"/>
</dbReference>
<dbReference type="PANTHER" id="PTHR43464:SF19">
    <property type="entry name" value="UBIQUINONE BIOSYNTHESIS O-METHYLTRANSFERASE, MITOCHONDRIAL"/>
    <property type="match status" value="1"/>
</dbReference>
<dbReference type="Pfam" id="PF13489">
    <property type="entry name" value="Methyltransf_23"/>
    <property type="match status" value="1"/>
</dbReference>
<dbReference type="SUPFAM" id="SSF53335">
    <property type="entry name" value="S-adenosyl-L-methionine-dependent methyltransferases"/>
    <property type="match status" value="1"/>
</dbReference>
<evidence type="ECO:0000255" key="1">
    <source>
        <dbReference type="HAMAP-Rule" id="MF_00472"/>
    </source>
</evidence>